<keyword id="KW-0963">Cytoplasm</keyword>
<keyword id="KW-1185">Reference proteome</keyword>
<accession>Q6P4Z5</accession>
<accession>Q28CE4</accession>
<gene>
    <name type="primary">ywhaz</name>
    <name type="ORF">TTpA004p03.1</name>
</gene>
<comment type="function">
    <text evidence="2">Adapter protein implicated in the regulation of a large spectrum of both general and specialized signaling pathways. Binds to a large number of partners, usually by recognition of a phosphoserine or phosphothreonine motif. Binding generally results in the modulation of the activity of the binding partner.</text>
</comment>
<comment type="subunit">
    <text evidence="2">Homodimer.</text>
</comment>
<comment type="subcellular location">
    <subcellularLocation>
        <location evidence="2">Cytoplasm</location>
    </subcellularLocation>
</comment>
<comment type="similarity">
    <text evidence="3">Belongs to the 14-3-3 family.</text>
</comment>
<evidence type="ECO:0000250" key="1">
    <source>
        <dbReference type="UniProtKB" id="P63103"/>
    </source>
</evidence>
<evidence type="ECO:0000250" key="2">
    <source>
        <dbReference type="UniProtKB" id="P63104"/>
    </source>
</evidence>
<evidence type="ECO:0000305" key="3"/>
<protein>
    <recommendedName>
        <fullName>14-3-3 protein zeta</fullName>
    </recommendedName>
</protein>
<name>1433Z_XENTR</name>
<sequence length="245" mass="27732">MDKNELVQKAKLAEQAERYDDMAACMKRVTEEGGELSNEERNLLSVAYKNVVGARRSSWRVVSSIEQKTEGAEKKQEMSREYREKIEAELREICNDVLNLLDKFLIANASQPESKVFYLKMKGDYYRYLAEVASGDAKADIVAQSQKAYQDAFDISKTEMQPTHPIRLGLALNFSVFYYEILNCPEKACSLAKAAFDEAIAELDTLSEESYKDSTLIMQLLRDNLTLWTSDTQGDEAEQGEGGEN</sequence>
<reference key="1">
    <citation type="submission" date="2006-03" db="EMBL/GenBank/DDBJ databases">
        <authorList>
            <consortium name="Sanger Xenopus tropicalis EST/cDNA project"/>
        </authorList>
    </citation>
    <scope>NUCLEOTIDE SEQUENCE [LARGE SCALE MRNA]</scope>
    <source>
        <tissue>Tadpole</tissue>
    </source>
</reference>
<reference key="2">
    <citation type="submission" date="2003-12" db="EMBL/GenBank/DDBJ databases">
        <authorList>
            <consortium name="NIH - Xenopus Gene Collection (XGC) project"/>
        </authorList>
    </citation>
    <scope>NUCLEOTIDE SEQUENCE [LARGE SCALE MRNA]</scope>
    <source>
        <tissue>Embryo</tissue>
    </source>
</reference>
<organism>
    <name type="scientific">Xenopus tropicalis</name>
    <name type="common">Western clawed frog</name>
    <name type="synonym">Silurana tropicalis</name>
    <dbReference type="NCBI Taxonomy" id="8364"/>
    <lineage>
        <taxon>Eukaryota</taxon>
        <taxon>Metazoa</taxon>
        <taxon>Chordata</taxon>
        <taxon>Craniata</taxon>
        <taxon>Vertebrata</taxon>
        <taxon>Euteleostomi</taxon>
        <taxon>Amphibia</taxon>
        <taxon>Batrachia</taxon>
        <taxon>Anura</taxon>
        <taxon>Pipoidea</taxon>
        <taxon>Pipidae</taxon>
        <taxon>Xenopodinae</taxon>
        <taxon>Xenopus</taxon>
        <taxon>Silurana</taxon>
    </lineage>
</organism>
<feature type="chain" id="PRO_0000058634" description="14-3-3 protein zeta">
    <location>
        <begin position="1"/>
        <end position="245"/>
    </location>
</feature>
<feature type="site" description="Interaction with phosphoserine on interacting protein" evidence="1">
    <location>
        <position position="56"/>
    </location>
</feature>
<feature type="site" description="Interaction with phosphoserine on interacting protein" evidence="1">
    <location>
        <position position="127"/>
    </location>
</feature>
<dbReference type="EMBL" id="CR926430">
    <property type="protein sequence ID" value="CAJ82916.1"/>
    <property type="molecule type" value="mRNA"/>
</dbReference>
<dbReference type="EMBL" id="BC063188">
    <property type="protein sequence ID" value="AAH63188.1"/>
    <property type="molecule type" value="mRNA"/>
</dbReference>
<dbReference type="RefSeq" id="NP_989173.1">
    <property type="nucleotide sequence ID" value="NM_203842.1"/>
</dbReference>
<dbReference type="RefSeq" id="XP_017950074.1">
    <property type="nucleotide sequence ID" value="XM_018094585.1"/>
</dbReference>
<dbReference type="SMR" id="Q6P4Z5"/>
<dbReference type="FunCoup" id="Q6P4Z5">
    <property type="interactions" value="2662"/>
</dbReference>
<dbReference type="STRING" id="8364.ENSXETP00000025081"/>
<dbReference type="PaxDb" id="8364-ENSXETP00000013608"/>
<dbReference type="DNASU" id="394780"/>
<dbReference type="GeneID" id="394780"/>
<dbReference type="KEGG" id="xtr:394780"/>
<dbReference type="AGR" id="Xenbase:XB-GENE-970616"/>
<dbReference type="CTD" id="7534"/>
<dbReference type="Xenbase" id="XB-GENE-970616">
    <property type="gene designation" value="ywhaz"/>
</dbReference>
<dbReference type="eggNOG" id="KOG0841">
    <property type="taxonomic scope" value="Eukaryota"/>
</dbReference>
<dbReference type="HOGENOM" id="CLU_058290_1_0_1"/>
<dbReference type="InParanoid" id="Q6P4Z5"/>
<dbReference type="OMA" id="YDEMVNE"/>
<dbReference type="OrthoDB" id="10260625at2759"/>
<dbReference type="PhylomeDB" id="Q6P4Z5"/>
<dbReference type="Reactome" id="R-XTR-111447">
    <property type="pathway name" value="Activation of BAD and translocation to mitochondria"/>
</dbReference>
<dbReference type="Reactome" id="R-XTR-3769402">
    <property type="pathway name" value="Deactivation of the beta-catenin transactivating complex"/>
</dbReference>
<dbReference type="Reactome" id="R-XTR-392517">
    <property type="pathway name" value="Rap1 signalling"/>
</dbReference>
<dbReference type="Reactome" id="R-XTR-430116">
    <property type="pathway name" value="GP1b-IX-V activation signalling"/>
</dbReference>
<dbReference type="Reactome" id="R-XTR-450604">
    <property type="pathway name" value="KSRP (KHSRP) binds and destabilizes mRNA"/>
</dbReference>
<dbReference type="Reactome" id="R-XTR-5628897">
    <property type="pathway name" value="TP53 Regulates Metabolic Genes"/>
</dbReference>
<dbReference type="Reactome" id="R-XTR-9614399">
    <property type="pathway name" value="Regulation of localization of FOXO transcription factors"/>
</dbReference>
<dbReference type="Proteomes" id="UP000008143">
    <property type="component" value="Chromosome 6"/>
</dbReference>
<dbReference type="Bgee" id="ENSXETG00000026459">
    <property type="expression patterns" value="Expressed in central nervous system and 28 other cell types or tissues"/>
</dbReference>
<dbReference type="ExpressionAtlas" id="Q6P4Z5">
    <property type="expression patterns" value="differential"/>
</dbReference>
<dbReference type="GO" id="GO:0005737">
    <property type="term" value="C:cytoplasm"/>
    <property type="evidence" value="ECO:0007669"/>
    <property type="project" value="UniProtKB-SubCell"/>
</dbReference>
<dbReference type="GO" id="GO:0050815">
    <property type="term" value="F:phosphoserine residue binding"/>
    <property type="evidence" value="ECO:0000250"/>
    <property type="project" value="UniProtKB"/>
</dbReference>
<dbReference type="GO" id="GO:0140311">
    <property type="term" value="F:protein sequestering activity"/>
    <property type="evidence" value="ECO:0000250"/>
    <property type="project" value="UniProtKB"/>
</dbReference>
<dbReference type="GO" id="GO:0070372">
    <property type="term" value="P:regulation of ERK1 and ERK2 cascade"/>
    <property type="evidence" value="ECO:0000250"/>
    <property type="project" value="UniProtKB"/>
</dbReference>
<dbReference type="FunFam" id="1.20.190.20:FF:000001">
    <property type="entry name" value="14-3-3 gamma 1"/>
    <property type="match status" value="1"/>
</dbReference>
<dbReference type="Gene3D" id="1.20.190.20">
    <property type="entry name" value="14-3-3 domain"/>
    <property type="match status" value="1"/>
</dbReference>
<dbReference type="InterPro" id="IPR000308">
    <property type="entry name" value="14-3-3"/>
</dbReference>
<dbReference type="InterPro" id="IPR023409">
    <property type="entry name" value="14-3-3_CS"/>
</dbReference>
<dbReference type="InterPro" id="IPR036815">
    <property type="entry name" value="14-3-3_dom_sf"/>
</dbReference>
<dbReference type="InterPro" id="IPR023410">
    <property type="entry name" value="14-3-3_domain"/>
</dbReference>
<dbReference type="PANTHER" id="PTHR18860">
    <property type="entry name" value="14-3-3 PROTEIN"/>
    <property type="match status" value="1"/>
</dbReference>
<dbReference type="Pfam" id="PF00244">
    <property type="entry name" value="14-3-3"/>
    <property type="match status" value="1"/>
</dbReference>
<dbReference type="PIRSF" id="PIRSF000868">
    <property type="entry name" value="14-3-3"/>
    <property type="match status" value="1"/>
</dbReference>
<dbReference type="PRINTS" id="PR00305">
    <property type="entry name" value="1433ZETA"/>
</dbReference>
<dbReference type="SMART" id="SM00101">
    <property type="entry name" value="14_3_3"/>
    <property type="match status" value="1"/>
</dbReference>
<dbReference type="SUPFAM" id="SSF48445">
    <property type="entry name" value="14-3-3 protein"/>
    <property type="match status" value="1"/>
</dbReference>
<dbReference type="PROSITE" id="PS00796">
    <property type="entry name" value="1433_1"/>
    <property type="match status" value="1"/>
</dbReference>
<dbReference type="PROSITE" id="PS00797">
    <property type="entry name" value="1433_2"/>
    <property type="match status" value="1"/>
</dbReference>
<proteinExistence type="evidence at transcript level"/>